<keyword id="KW-0227">DNA damage</keyword>
<keyword id="KW-0234">DNA repair</keyword>
<keyword id="KW-0235">DNA replication</keyword>
<keyword id="KW-0436">Ligase</keyword>
<keyword id="KW-0460">Magnesium</keyword>
<keyword id="KW-0464">Manganese</keyword>
<keyword id="KW-0479">Metal-binding</keyword>
<keyword id="KW-0520">NAD</keyword>
<keyword id="KW-0862">Zinc</keyword>
<organism>
    <name type="scientific">Geobacillus thermodenitrificans (strain NG80-2)</name>
    <dbReference type="NCBI Taxonomy" id="420246"/>
    <lineage>
        <taxon>Bacteria</taxon>
        <taxon>Bacillati</taxon>
        <taxon>Bacillota</taxon>
        <taxon>Bacilli</taxon>
        <taxon>Bacillales</taxon>
        <taxon>Anoxybacillaceae</taxon>
        <taxon>Geobacillus</taxon>
    </lineage>
</organism>
<comment type="function">
    <text evidence="1">DNA ligase that catalyzes the formation of phosphodiester linkages between 5'-phosphoryl and 3'-hydroxyl groups in double-stranded DNA using NAD as a coenzyme and as the energy source for the reaction. It is essential for DNA replication and repair of damaged DNA.</text>
</comment>
<comment type="catalytic activity">
    <reaction evidence="1">
        <text>NAD(+) + (deoxyribonucleotide)n-3'-hydroxyl + 5'-phospho-(deoxyribonucleotide)m = (deoxyribonucleotide)n+m + AMP + beta-nicotinamide D-nucleotide.</text>
        <dbReference type="EC" id="6.5.1.2"/>
    </reaction>
</comment>
<comment type="cofactor">
    <cofactor evidence="1">
        <name>Mg(2+)</name>
        <dbReference type="ChEBI" id="CHEBI:18420"/>
    </cofactor>
    <cofactor evidence="1">
        <name>Mn(2+)</name>
        <dbReference type="ChEBI" id="CHEBI:29035"/>
    </cofactor>
</comment>
<comment type="similarity">
    <text evidence="1">Belongs to the NAD-dependent DNA ligase family. LigA subfamily.</text>
</comment>
<evidence type="ECO:0000255" key="1">
    <source>
        <dbReference type="HAMAP-Rule" id="MF_01588"/>
    </source>
</evidence>
<gene>
    <name evidence="1" type="primary">ligA</name>
    <name type="ordered locus">GTNG_0256</name>
</gene>
<accession>A4IJY6</accession>
<proteinExistence type="inferred from homology"/>
<dbReference type="EC" id="6.5.1.2" evidence="1"/>
<dbReference type="EMBL" id="CP000557">
    <property type="protein sequence ID" value="ABO65640.1"/>
    <property type="molecule type" value="Genomic_DNA"/>
</dbReference>
<dbReference type="RefSeq" id="WP_011886691.1">
    <property type="nucleotide sequence ID" value="NC_009328.1"/>
</dbReference>
<dbReference type="SMR" id="A4IJY6"/>
<dbReference type="KEGG" id="gtn:GTNG_0256"/>
<dbReference type="eggNOG" id="COG0272">
    <property type="taxonomic scope" value="Bacteria"/>
</dbReference>
<dbReference type="HOGENOM" id="CLU_007764_2_1_9"/>
<dbReference type="Proteomes" id="UP000001578">
    <property type="component" value="Chromosome"/>
</dbReference>
<dbReference type="GO" id="GO:0005829">
    <property type="term" value="C:cytosol"/>
    <property type="evidence" value="ECO:0007669"/>
    <property type="project" value="TreeGrafter"/>
</dbReference>
<dbReference type="GO" id="GO:0003677">
    <property type="term" value="F:DNA binding"/>
    <property type="evidence" value="ECO:0007669"/>
    <property type="project" value="InterPro"/>
</dbReference>
<dbReference type="GO" id="GO:0003911">
    <property type="term" value="F:DNA ligase (NAD+) activity"/>
    <property type="evidence" value="ECO:0007669"/>
    <property type="project" value="UniProtKB-UniRule"/>
</dbReference>
<dbReference type="GO" id="GO:0046872">
    <property type="term" value="F:metal ion binding"/>
    <property type="evidence" value="ECO:0007669"/>
    <property type="project" value="UniProtKB-KW"/>
</dbReference>
<dbReference type="GO" id="GO:0006281">
    <property type="term" value="P:DNA repair"/>
    <property type="evidence" value="ECO:0007669"/>
    <property type="project" value="UniProtKB-KW"/>
</dbReference>
<dbReference type="GO" id="GO:0006260">
    <property type="term" value="P:DNA replication"/>
    <property type="evidence" value="ECO:0007669"/>
    <property type="project" value="UniProtKB-KW"/>
</dbReference>
<dbReference type="CDD" id="cd17748">
    <property type="entry name" value="BRCT_DNA_ligase_like"/>
    <property type="match status" value="1"/>
</dbReference>
<dbReference type="CDD" id="cd00114">
    <property type="entry name" value="LIGANc"/>
    <property type="match status" value="1"/>
</dbReference>
<dbReference type="FunFam" id="1.10.150.20:FF:000006">
    <property type="entry name" value="DNA ligase"/>
    <property type="match status" value="1"/>
</dbReference>
<dbReference type="FunFam" id="1.10.150.20:FF:000007">
    <property type="entry name" value="DNA ligase"/>
    <property type="match status" value="1"/>
</dbReference>
<dbReference type="FunFam" id="1.10.287.610:FF:000002">
    <property type="entry name" value="DNA ligase"/>
    <property type="match status" value="1"/>
</dbReference>
<dbReference type="FunFam" id="2.40.50.140:FF:000012">
    <property type="entry name" value="DNA ligase"/>
    <property type="match status" value="1"/>
</dbReference>
<dbReference type="FunFam" id="3.30.470.30:FF:000001">
    <property type="entry name" value="DNA ligase"/>
    <property type="match status" value="1"/>
</dbReference>
<dbReference type="Gene3D" id="6.20.10.30">
    <property type="match status" value="1"/>
</dbReference>
<dbReference type="Gene3D" id="1.10.150.20">
    <property type="entry name" value="5' to 3' exonuclease, C-terminal subdomain"/>
    <property type="match status" value="2"/>
</dbReference>
<dbReference type="Gene3D" id="3.40.50.10190">
    <property type="entry name" value="BRCT domain"/>
    <property type="match status" value="1"/>
</dbReference>
<dbReference type="Gene3D" id="3.30.470.30">
    <property type="entry name" value="DNA ligase/mRNA capping enzyme"/>
    <property type="match status" value="1"/>
</dbReference>
<dbReference type="Gene3D" id="1.10.287.610">
    <property type="entry name" value="Helix hairpin bin"/>
    <property type="match status" value="1"/>
</dbReference>
<dbReference type="Gene3D" id="2.40.50.140">
    <property type="entry name" value="Nucleic acid-binding proteins"/>
    <property type="match status" value="1"/>
</dbReference>
<dbReference type="HAMAP" id="MF_01588">
    <property type="entry name" value="DNA_ligase_A"/>
    <property type="match status" value="1"/>
</dbReference>
<dbReference type="InterPro" id="IPR001357">
    <property type="entry name" value="BRCT_dom"/>
</dbReference>
<dbReference type="InterPro" id="IPR036420">
    <property type="entry name" value="BRCT_dom_sf"/>
</dbReference>
<dbReference type="InterPro" id="IPR041663">
    <property type="entry name" value="DisA/LigA_HHH"/>
</dbReference>
<dbReference type="InterPro" id="IPR001679">
    <property type="entry name" value="DNA_ligase"/>
</dbReference>
<dbReference type="InterPro" id="IPR018239">
    <property type="entry name" value="DNA_ligase_AS"/>
</dbReference>
<dbReference type="InterPro" id="IPR033136">
    <property type="entry name" value="DNA_ligase_CS"/>
</dbReference>
<dbReference type="InterPro" id="IPR013839">
    <property type="entry name" value="DNAligase_adenylation"/>
</dbReference>
<dbReference type="InterPro" id="IPR013840">
    <property type="entry name" value="DNAligase_N"/>
</dbReference>
<dbReference type="InterPro" id="IPR003583">
    <property type="entry name" value="Hlx-hairpin-Hlx_DNA-bd_motif"/>
</dbReference>
<dbReference type="InterPro" id="IPR012340">
    <property type="entry name" value="NA-bd_OB-fold"/>
</dbReference>
<dbReference type="InterPro" id="IPR004150">
    <property type="entry name" value="NAD_DNA_ligase_OB"/>
</dbReference>
<dbReference type="InterPro" id="IPR010994">
    <property type="entry name" value="RuvA_2-like"/>
</dbReference>
<dbReference type="InterPro" id="IPR004149">
    <property type="entry name" value="Znf_DNAligase_C4"/>
</dbReference>
<dbReference type="NCBIfam" id="TIGR00575">
    <property type="entry name" value="dnlj"/>
    <property type="match status" value="1"/>
</dbReference>
<dbReference type="NCBIfam" id="NF005932">
    <property type="entry name" value="PRK07956.1"/>
    <property type="match status" value="1"/>
</dbReference>
<dbReference type="PANTHER" id="PTHR23389">
    <property type="entry name" value="CHROMOSOME TRANSMISSION FIDELITY FACTOR 18"/>
    <property type="match status" value="1"/>
</dbReference>
<dbReference type="PANTHER" id="PTHR23389:SF9">
    <property type="entry name" value="DNA LIGASE"/>
    <property type="match status" value="1"/>
</dbReference>
<dbReference type="Pfam" id="PF00533">
    <property type="entry name" value="BRCT"/>
    <property type="match status" value="1"/>
</dbReference>
<dbReference type="Pfam" id="PF01653">
    <property type="entry name" value="DNA_ligase_aden"/>
    <property type="match status" value="1"/>
</dbReference>
<dbReference type="Pfam" id="PF03120">
    <property type="entry name" value="DNA_ligase_OB"/>
    <property type="match status" value="1"/>
</dbReference>
<dbReference type="Pfam" id="PF03119">
    <property type="entry name" value="DNA_ligase_ZBD"/>
    <property type="match status" value="1"/>
</dbReference>
<dbReference type="Pfam" id="PF12826">
    <property type="entry name" value="HHH_2"/>
    <property type="match status" value="1"/>
</dbReference>
<dbReference type="Pfam" id="PF14520">
    <property type="entry name" value="HHH_5"/>
    <property type="match status" value="1"/>
</dbReference>
<dbReference type="Pfam" id="PF22745">
    <property type="entry name" value="Nlig-Ia"/>
    <property type="match status" value="1"/>
</dbReference>
<dbReference type="PIRSF" id="PIRSF001604">
    <property type="entry name" value="LigA"/>
    <property type="match status" value="1"/>
</dbReference>
<dbReference type="SMART" id="SM00292">
    <property type="entry name" value="BRCT"/>
    <property type="match status" value="1"/>
</dbReference>
<dbReference type="SMART" id="SM00278">
    <property type="entry name" value="HhH1"/>
    <property type="match status" value="3"/>
</dbReference>
<dbReference type="SMART" id="SM00532">
    <property type="entry name" value="LIGANc"/>
    <property type="match status" value="1"/>
</dbReference>
<dbReference type="SUPFAM" id="SSF52113">
    <property type="entry name" value="BRCT domain"/>
    <property type="match status" value="1"/>
</dbReference>
<dbReference type="SUPFAM" id="SSF56091">
    <property type="entry name" value="DNA ligase/mRNA capping enzyme, catalytic domain"/>
    <property type="match status" value="1"/>
</dbReference>
<dbReference type="SUPFAM" id="SSF50249">
    <property type="entry name" value="Nucleic acid-binding proteins"/>
    <property type="match status" value="1"/>
</dbReference>
<dbReference type="SUPFAM" id="SSF47781">
    <property type="entry name" value="RuvA domain 2-like"/>
    <property type="match status" value="1"/>
</dbReference>
<dbReference type="PROSITE" id="PS50172">
    <property type="entry name" value="BRCT"/>
    <property type="match status" value="1"/>
</dbReference>
<dbReference type="PROSITE" id="PS01055">
    <property type="entry name" value="DNA_LIGASE_N1"/>
    <property type="match status" value="1"/>
</dbReference>
<dbReference type="PROSITE" id="PS01056">
    <property type="entry name" value="DNA_LIGASE_N2"/>
    <property type="match status" value="1"/>
</dbReference>
<name>DNLJ_GEOTN</name>
<protein>
    <recommendedName>
        <fullName evidence="1">DNA ligase</fullName>
        <ecNumber evidence="1">6.5.1.2</ecNumber>
    </recommendedName>
    <alternativeName>
        <fullName evidence="1">Polydeoxyribonucleotide synthase [NAD(+)]</fullName>
    </alternativeName>
</protein>
<reference key="1">
    <citation type="journal article" date="2007" name="Proc. Natl. Acad. Sci. U.S.A.">
        <title>Genome and proteome of long-chain alkane degrading Geobacillus thermodenitrificans NG80-2 isolated from a deep-subsurface oil reservoir.</title>
        <authorList>
            <person name="Feng L."/>
            <person name="Wang W."/>
            <person name="Cheng J."/>
            <person name="Ren Y."/>
            <person name="Zhao G."/>
            <person name="Gao C."/>
            <person name="Tang Y."/>
            <person name="Liu X."/>
            <person name="Han W."/>
            <person name="Peng X."/>
            <person name="Liu R."/>
            <person name="Wang L."/>
        </authorList>
    </citation>
    <scope>NUCLEOTIDE SEQUENCE [LARGE SCALE GENOMIC DNA]</scope>
    <source>
        <strain>NG80-2</strain>
    </source>
</reference>
<sequence>MDRQQAKRRAAELRELLNRYGYEYYVLDRPSVPDAEYDRLMQELIAIEKQYPELKTSDSPTQRIGGPPLEAFRKVTHRVPMMSLANAFNEGDLRDFDRRVRQEVGEAAYVCELKIDGLAVSVRYEDGYFVQGATRGDGTTGEDITENLKTIRSLPLRLNEPVSLEARGEAFMPKASFLRLNEERQARGEELFANPRNAAAGSLRQLDPKVAASRQLDLFVYGLANAEELGIESHSAALSYLQSLGFKVNPERRRCATIDEVIAFVNEWKEKRPQLPYEIDGIVIKVDSFAQQRQLGATAKSPRWAIAYKFPAEEVVTTLIGIEVNVGRTGAVTPTAILEPVRVAGTTVQRATLHNEDFIREKDIRIGDAVIIKKAGDIIPEVVGVVVDRRDGDEVPFTMPTHCPECESELVRLDGEVALRCLNPKCPAQLRERLIHFASRSAMNIEGLGEKVVTQLFNAGLVHDVADLYQLTKEQLVGLERMGEKSAANLLAAIEASKQNSLERLLFGLGIRYVGAKAAQLLAEHFETMERLEAATKDELMAVPEIGEKMADSITTYFSQPEAVELLNELRTYGVNMAYKGRKRTAETPASSVLAGKTVVLTGKLASMSRNEAKEQIERLGGRVTGSVSRSTDIVIAGEDAGSKLDKAQQLGIEIWDETRFLQEISREEQ</sequence>
<feature type="chain" id="PRO_0000313248" description="DNA ligase">
    <location>
        <begin position="1"/>
        <end position="670"/>
    </location>
</feature>
<feature type="domain" description="BRCT" evidence="1">
    <location>
        <begin position="589"/>
        <end position="670"/>
    </location>
</feature>
<feature type="active site" description="N6-AMP-lysine intermediate" evidence="1">
    <location>
        <position position="114"/>
    </location>
</feature>
<feature type="binding site" evidence="1">
    <location>
        <begin position="34"/>
        <end position="38"/>
    </location>
    <ligand>
        <name>NAD(+)</name>
        <dbReference type="ChEBI" id="CHEBI:57540"/>
    </ligand>
</feature>
<feature type="binding site" evidence="1">
    <location>
        <begin position="83"/>
        <end position="84"/>
    </location>
    <ligand>
        <name>NAD(+)</name>
        <dbReference type="ChEBI" id="CHEBI:57540"/>
    </ligand>
</feature>
<feature type="binding site" evidence="1">
    <location>
        <position position="112"/>
    </location>
    <ligand>
        <name>NAD(+)</name>
        <dbReference type="ChEBI" id="CHEBI:57540"/>
    </ligand>
</feature>
<feature type="binding site" evidence="1">
    <location>
        <position position="135"/>
    </location>
    <ligand>
        <name>NAD(+)</name>
        <dbReference type="ChEBI" id="CHEBI:57540"/>
    </ligand>
</feature>
<feature type="binding site" evidence="1">
    <location>
        <position position="169"/>
    </location>
    <ligand>
        <name>NAD(+)</name>
        <dbReference type="ChEBI" id="CHEBI:57540"/>
    </ligand>
</feature>
<feature type="binding site" evidence="1">
    <location>
        <position position="285"/>
    </location>
    <ligand>
        <name>NAD(+)</name>
        <dbReference type="ChEBI" id="CHEBI:57540"/>
    </ligand>
</feature>
<feature type="binding site" evidence="1">
    <location>
        <position position="309"/>
    </location>
    <ligand>
        <name>NAD(+)</name>
        <dbReference type="ChEBI" id="CHEBI:57540"/>
    </ligand>
</feature>
<feature type="binding site" evidence="1">
    <location>
        <position position="403"/>
    </location>
    <ligand>
        <name>Zn(2+)</name>
        <dbReference type="ChEBI" id="CHEBI:29105"/>
    </ligand>
</feature>
<feature type="binding site" evidence="1">
    <location>
        <position position="406"/>
    </location>
    <ligand>
        <name>Zn(2+)</name>
        <dbReference type="ChEBI" id="CHEBI:29105"/>
    </ligand>
</feature>
<feature type="binding site" evidence="1">
    <location>
        <position position="421"/>
    </location>
    <ligand>
        <name>Zn(2+)</name>
        <dbReference type="ChEBI" id="CHEBI:29105"/>
    </ligand>
</feature>
<feature type="binding site" evidence="1">
    <location>
        <position position="426"/>
    </location>
    <ligand>
        <name>Zn(2+)</name>
        <dbReference type="ChEBI" id="CHEBI:29105"/>
    </ligand>
</feature>